<comment type="function">
    <text evidence="1">Binds the lower part of the 30S subunit head. Binds mRNA in the 70S ribosome, positioning it for translation.</text>
</comment>
<comment type="subunit">
    <text evidence="1">Part of the 30S ribosomal subunit. Forms a tight complex with proteins S10 and S14.</text>
</comment>
<comment type="similarity">
    <text evidence="1">Belongs to the universal ribosomal protein uS3 family.</text>
</comment>
<dbReference type="EMBL" id="CP000252">
    <property type="protein sequence ID" value="ABC76186.1"/>
    <property type="molecule type" value="Genomic_DNA"/>
</dbReference>
<dbReference type="RefSeq" id="WP_011416220.1">
    <property type="nucleotide sequence ID" value="NC_007759.1"/>
</dbReference>
<dbReference type="SMR" id="Q2LQ95"/>
<dbReference type="FunCoup" id="Q2LQ95">
    <property type="interactions" value="652"/>
</dbReference>
<dbReference type="STRING" id="56780.SYN_00991"/>
<dbReference type="KEGG" id="sat:SYN_00991"/>
<dbReference type="eggNOG" id="COG0092">
    <property type="taxonomic scope" value="Bacteria"/>
</dbReference>
<dbReference type="HOGENOM" id="CLU_058591_0_2_7"/>
<dbReference type="InParanoid" id="Q2LQ95"/>
<dbReference type="OrthoDB" id="9806396at2"/>
<dbReference type="Proteomes" id="UP000001933">
    <property type="component" value="Chromosome"/>
</dbReference>
<dbReference type="GO" id="GO:0022627">
    <property type="term" value="C:cytosolic small ribosomal subunit"/>
    <property type="evidence" value="ECO:0007669"/>
    <property type="project" value="TreeGrafter"/>
</dbReference>
<dbReference type="GO" id="GO:0003729">
    <property type="term" value="F:mRNA binding"/>
    <property type="evidence" value="ECO:0007669"/>
    <property type="project" value="UniProtKB-UniRule"/>
</dbReference>
<dbReference type="GO" id="GO:0019843">
    <property type="term" value="F:rRNA binding"/>
    <property type="evidence" value="ECO:0007669"/>
    <property type="project" value="UniProtKB-UniRule"/>
</dbReference>
<dbReference type="GO" id="GO:0003735">
    <property type="term" value="F:structural constituent of ribosome"/>
    <property type="evidence" value="ECO:0007669"/>
    <property type="project" value="InterPro"/>
</dbReference>
<dbReference type="GO" id="GO:0006412">
    <property type="term" value="P:translation"/>
    <property type="evidence" value="ECO:0007669"/>
    <property type="project" value="UniProtKB-UniRule"/>
</dbReference>
<dbReference type="CDD" id="cd02412">
    <property type="entry name" value="KH-II_30S_S3"/>
    <property type="match status" value="1"/>
</dbReference>
<dbReference type="FunFam" id="3.30.1140.32:FF:000002">
    <property type="entry name" value="30S ribosomal protein S3"/>
    <property type="match status" value="1"/>
</dbReference>
<dbReference type="FunFam" id="3.30.300.20:FF:000001">
    <property type="entry name" value="30S ribosomal protein S3"/>
    <property type="match status" value="1"/>
</dbReference>
<dbReference type="Gene3D" id="3.30.300.20">
    <property type="match status" value="1"/>
</dbReference>
<dbReference type="Gene3D" id="3.30.1140.32">
    <property type="entry name" value="Ribosomal protein S3, C-terminal domain"/>
    <property type="match status" value="1"/>
</dbReference>
<dbReference type="HAMAP" id="MF_01309_B">
    <property type="entry name" value="Ribosomal_uS3_B"/>
    <property type="match status" value="1"/>
</dbReference>
<dbReference type="InterPro" id="IPR004087">
    <property type="entry name" value="KH_dom"/>
</dbReference>
<dbReference type="InterPro" id="IPR015946">
    <property type="entry name" value="KH_dom-like_a/b"/>
</dbReference>
<dbReference type="InterPro" id="IPR004044">
    <property type="entry name" value="KH_dom_type_2"/>
</dbReference>
<dbReference type="InterPro" id="IPR009019">
    <property type="entry name" value="KH_sf_prok-type"/>
</dbReference>
<dbReference type="InterPro" id="IPR036419">
    <property type="entry name" value="Ribosomal_S3_C_sf"/>
</dbReference>
<dbReference type="InterPro" id="IPR005704">
    <property type="entry name" value="Ribosomal_uS3_bac-typ"/>
</dbReference>
<dbReference type="InterPro" id="IPR001351">
    <property type="entry name" value="Ribosomal_uS3_C"/>
</dbReference>
<dbReference type="InterPro" id="IPR018280">
    <property type="entry name" value="Ribosomal_uS3_CS"/>
</dbReference>
<dbReference type="NCBIfam" id="TIGR01009">
    <property type="entry name" value="rpsC_bact"/>
    <property type="match status" value="1"/>
</dbReference>
<dbReference type="PANTHER" id="PTHR11760">
    <property type="entry name" value="30S/40S RIBOSOMAL PROTEIN S3"/>
    <property type="match status" value="1"/>
</dbReference>
<dbReference type="PANTHER" id="PTHR11760:SF19">
    <property type="entry name" value="SMALL RIBOSOMAL SUBUNIT PROTEIN US3C"/>
    <property type="match status" value="1"/>
</dbReference>
<dbReference type="Pfam" id="PF07650">
    <property type="entry name" value="KH_2"/>
    <property type="match status" value="1"/>
</dbReference>
<dbReference type="Pfam" id="PF00189">
    <property type="entry name" value="Ribosomal_S3_C"/>
    <property type="match status" value="1"/>
</dbReference>
<dbReference type="SMART" id="SM00322">
    <property type="entry name" value="KH"/>
    <property type="match status" value="1"/>
</dbReference>
<dbReference type="SUPFAM" id="SSF54814">
    <property type="entry name" value="Prokaryotic type KH domain (KH-domain type II)"/>
    <property type="match status" value="1"/>
</dbReference>
<dbReference type="SUPFAM" id="SSF54821">
    <property type="entry name" value="Ribosomal protein S3 C-terminal domain"/>
    <property type="match status" value="1"/>
</dbReference>
<dbReference type="PROSITE" id="PS50823">
    <property type="entry name" value="KH_TYPE_2"/>
    <property type="match status" value="1"/>
</dbReference>
<dbReference type="PROSITE" id="PS00548">
    <property type="entry name" value="RIBOSOMAL_S3"/>
    <property type="match status" value="1"/>
</dbReference>
<organism>
    <name type="scientific">Syntrophus aciditrophicus (strain SB)</name>
    <dbReference type="NCBI Taxonomy" id="56780"/>
    <lineage>
        <taxon>Bacteria</taxon>
        <taxon>Pseudomonadati</taxon>
        <taxon>Thermodesulfobacteriota</taxon>
        <taxon>Syntrophia</taxon>
        <taxon>Syntrophales</taxon>
        <taxon>Syntrophaceae</taxon>
        <taxon>Syntrophus</taxon>
    </lineage>
</organism>
<keyword id="KW-1185">Reference proteome</keyword>
<keyword id="KW-0687">Ribonucleoprotein</keyword>
<keyword id="KW-0689">Ribosomal protein</keyword>
<keyword id="KW-0694">RNA-binding</keyword>
<keyword id="KW-0699">rRNA-binding</keyword>
<reference key="1">
    <citation type="journal article" date="2007" name="Proc. Natl. Acad. Sci. U.S.A.">
        <title>The genome of Syntrophus aciditrophicus: life at the thermodynamic limit of microbial growth.</title>
        <authorList>
            <person name="McInerney M.J."/>
            <person name="Rohlin L."/>
            <person name="Mouttaki H."/>
            <person name="Kim U."/>
            <person name="Krupp R.S."/>
            <person name="Rios-Hernandez L."/>
            <person name="Sieber J."/>
            <person name="Struchtemeyer C.G."/>
            <person name="Bhattacharyya A."/>
            <person name="Campbell J.W."/>
            <person name="Gunsalus R.P."/>
        </authorList>
    </citation>
    <scope>NUCLEOTIDE SEQUENCE [LARGE SCALE GENOMIC DNA]</scope>
    <source>
        <strain>SB</strain>
    </source>
</reference>
<protein>
    <recommendedName>
        <fullName evidence="1">Small ribosomal subunit protein uS3</fullName>
    </recommendedName>
    <alternativeName>
        <fullName evidence="2">30S ribosomal protein S3</fullName>
    </alternativeName>
</protein>
<sequence length="216" mass="24404">MGQKVNPIGLRLGINKNWNSRWYADKSYRSMLYEDLKIRGYLKKKLYHAGISHIDIERAVNKAKVNIYAARPGIIIGKKGAEIEKLKKELENVSSSEIIINILEVRKPEIDAQLVAENIATQLERRVAFRRAMKKCVLTALKFGAKGIRVSCSGRLGGAEMSRTEWYREGRVPLHTLRADIDSGFTEAKTAYGQIGIKVLIFHGEVLPGRKELEKP</sequence>
<accession>Q2LQ95</accession>
<name>RS3_SYNAS</name>
<proteinExistence type="inferred from homology"/>
<evidence type="ECO:0000255" key="1">
    <source>
        <dbReference type="HAMAP-Rule" id="MF_01309"/>
    </source>
</evidence>
<evidence type="ECO:0000305" key="2"/>
<feature type="chain" id="PRO_0000293911" description="Small ribosomal subunit protein uS3">
    <location>
        <begin position="1"/>
        <end position="216"/>
    </location>
</feature>
<feature type="domain" description="KH type-2" evidence="1">
    <location>
        <begin position="38"/>
        <end position="106"/>
    </location>
</feature>
<gene>
    <name evidence="1" type="primary">rpsC</name>
    <name type="ordered locus">SYNAS_03070</name>
    <name type="ORF">SYN_00991</name>
</gene>